<comment type="function">
    <text evidence="3 4">Essential for myoblast fusion in developing embryos and pupae, and consequently is essential for muscle formation in adults (PubMed:17537424, PubMed:25797154). Required for progression past the pre-fusion complex stage of myoblast fusion (PubMed:17537424).</text>
</comment>
<comment type="subcellular location">
    <subcellularLocation>
        <location evidence="1">Membrane</location>
        <topology evidence="1">Multi-pass membrane protein</topology>
    </subcellularLocation>
</comment>
<comment type="developmental stage">
    <text evidence="3 4">In embryos, expressed in the muscle founder cells (FCs) and the fusion-competent myoblasts (FCMs) (PubMed:17537424). Expressed in myoblasts of stage 13 embryos (PubMed:17537424, PubMed:25797154). Expressed in the visceral mesoderm from stage 10 and the somatic mesoderm from stage 11, and expression persists until stage 13 (PubMed:17537424).</text>
</comment>
<comment type="induction">
    <text evidence="4">By Mef2 during myoblast fusion in developing muscles of embryos and pupae.</text>
</comment>
<comment type="disruption phenotype">
    <text evidence="3 4">RNAi-mediated knockdown in pupae is adult lethal (PubMed:25797154). Pupae develop to the pharate adult stage and die before eclosion from the pupal case (PubMed:25797154). In pupae, fusion-competent myoblasts (FCMs) fail to fuse with the muscle founder templates (PubMed:25797154). Pharate adults display adherent muscle formation; only partially developed dorsal longitudinal muscles appear to be present but they are smaller and their nuclei are reduced in number and clustered together (PubMed:25797154). RNAi-mediated knockdown in embryos reduces myoblast fusion (PubMed:17537424). In RNAi pupae, there is no effect on myoblast proliferation, migration of the FCMs to the founder templates and initiation of myoblast fusion (PubMed:25797154).</text>
</comment>
<comment type="miscellaneous">
    <text evidence="5">Named 'singles bar' based upon the accumulation of single myoblasts in mutant embryos.</text>
</comment>
<reference evidence="9" key="1">
    <citation type="journal article" date="2000" name="Science">
        <title>The genome sequence of Drosophila melanogaster.</title>
        <authorList>
            <person name="Adams M.D."/>
            <person name="Celniker S.E."/>
            <person name="Holt R.A."/>
            <person name="Evans C.A."/>
            <person name="Gocayne J.D."/>
            <person name="Amanatides P.G."/>
            <person name="Scherer S.E."/>
            <person name="Li P.W."/>
            <person name="Hoskins R.A."/>
            <person name="Galle R.F."/>
            <person name="George R.A."/>
            <person name="Lewis S.E."/>
            <person name="Richards S."/>
            <person name="Ashburner M."/>
            <person name="Henderson S.N."/>
            <person name="Sutton G.G."/>
            <person name="Wortman J.R."/>
            <person name="Yandell M.D."/>
            <person name="Zhang Q."/>
            <person name="Chen L.X."/>
            <person name="Brandon R.C."/>
            <person name="Rogers Y.-H.C."/>
            <person name="Blazej R.G."/>
            <person name="Champe M."/>
            <person name="Pfeiffer B.D."/>
            <person name="Wan K.H."/>
            <person name="Doyle C."/>
            <person name="Baxter E.G."/>
            <person name="Helt G."/>
            <person name="Nelson C.R."/>
            <person name="Miklos G.L.G."/>
            <person name="Abril J.F."/>
            <person name="Agbayani A."/>
            <person name="An H.-J."/>
            <person name="Andrews-Pfannkoch C."/>
            <person name="Baldwin D."/>
            <person name="Ballew R.M."/>
            <person name="Basu A."/>
            <person name="Baxendale J."/>
            <person name="Bayraktaroglu L."/>
            <person name="Beasley E.M."/>
            <person name="Beeson K.Y."/>
            <person name="Benos P.V."/>
            <person name="Berman B.P."/>
            <person name="Bhandari D."/>
            <person name="Bolshakov S."/>
            <person name="Borkova D."/>
            <person name="Botchan M.R."/>
            <person name="Bouck J."/>
            <person name="Brokstein P."/>
            <person name="Brottier P."/>
            <person name="Burtis K.C."/>
            <person name="Busam D.A."/>
            <person name="Butler H."/>
            <person name="Cadieu E."/>
            <person name="Center A."/>
            <person name="Chandra I."/>
            <person name="Cherry J.M."/>
            <person name="Cawley S."/>
            <person name="Dahlke C."/>
            <person name="Davenport L.B."/>
            <person name="Davies P."/>
            <person name="de Pablos B."/>
            <person name="Delcher A."/>
            <person name="Deng Z."/>
            <person name="Mays A.D."/>
            <person name="Dew I."/>
            <person name="Dietz S.M."/>
            <person name="Dodson K."/>
            <person name="Doup L.E."/>
            <person name="Downes M."/>
            <person name="Dugan-Rocha S."/>
            <person name="Dunkov B.C."/>
            <person name="Dunn P."/>
            <person name="Durbin K.J."/>
            <person name="Evangelista C.C."/>
            <person name="Ferraz C."/>
            <person name="Ferriera S."/>
            <person name="Fleischmann W."/>
            <person name="Fosler C."/>
            <person name="Gabrielian A.E."/>
            <person name="Garg N.S."/>
            <person name="Gelbart W.M."/>
            <person name="Glasser K."/>
            <person name="Glodek A."/>
            <person name="Gong F."/>
            <person name="Gorrell J.H."/>
            <person name="Gu Z."/>
            <person name="Guan P."/>
            <person name="Harris M."/>
            <person name="Harris N.L."/>
            <person name="Harvey D.A."/>
            <person name="Heiman T.J."/>
            <person name="Hernandez J.R."/>
            <person name="Houck J."/>
            <person name="Hostin D."/>
            <person name="Houston K.A."/>
            <person name="Howland T.J."/>
            <person name="Wei M.-H."/>
            <person name="Ibegwam C."/>
            <person name="Jalali M."/>
            <person name="Kalush F."/>
            <person name="Karpen G.H."/>
            <person name="Ke Z."/>
            <person name="Kennison J.A."/>
            <person name="Ketchum K.A."/>
            <person name="Kimmel B.E."/>
            <person name="Kodira C.D."/>
            <person name="Kraft C.L."/>
            <person name="Kravitz S."/>
            <person name="Kulp D."/>
            <person name="Lai Z."/>
            <person name="Lasko P."/>
            <person name="Lei Y."/>
            <person name="Levitsky A.A."/>
            <person name="Li J.H."/>
            <person name="Li Z."/>
            <person name="Liang Y."/>
            <person name="Lin X."/>
            <person name="Liu X."/>
            <person name="Mattei B."/>
            <person name="McIntosh T.C."/>
            <person name="McLeod M.P."/>
            <person name="McPherson D."/>
            <person name="Merkulov G."/>
            <person name="Milshina N.V."/>
            <person name="Mobarry C."/>
            <person name="Morris J."/>
            <person name="Moshrefi A."/>
            <person name="Mount S.M."/>
            <person name="Moy M."/>
            <person name="Murphy B."/>
            <person name="Murphy L."/>
            <person name="Muzny D.M."/>
            <person name="Nelson D.L."/>
            <person name="Nelson D.R."/>
            <person name="Nelson K.A."/>
            <person name="Nixon K."/>
            <person name="Nusskern D.R."/>
            <person name="Pacleb J.M."/>
            <person name="Palazzolo M."/>
            <person name="Pittman G.S."/>
            <person name="Pan S."/>
            <person name="Pollard J."/>
            <person name="Puri V."/>
            <person name="Reese M.G."/>
            <person name="Reinert K."/>
            <person name="Remington K."/>
            <person name="Saunders R.D.C."/>
            <person name="Scheeler F."/>
            <person name="Shen H."/>
            <person name="Shue B.C."/>
            <person name="Siden-Kiamos I."/>
            <person name="Simpson M."/>
            <person name="Skupski M.P."/>
            <person name="Smith T.J."/>
            <person name="Spier E."/>
            <person name="Spradling A.C."/>
            <person name="Stapleton M."/>
            <person name="Strong R."/>
            <person name="Sun E."/>
            <person name="Svirskas R."/>
            <person name="Tector C."/>
            <person name="Turner R."/>
            <person name="Venter E."/>
            <person name="Wang A.H."/>
            <person name="Wang X."/>
            <person name="Wang Z.-Y."/>
            <person name="Wassarman D.A."/>
            <person name="Weinstock G.M."/>
            <person name="Weissenbach J."/>
            <person name="Williams S.M."/>
            <person name="Woodage T."/>
            <person name="Worley K.C."/>
            <person name="Wu D."/>
            <person name="Yang S."/>
            <person name="Yao Q.A."/>
            <person name="Ye J."/>
            <person name="Yeh R.-F."/>
            <person name="Zaveri J.S."/>
            <person name="Zhan M."/>
            <person name="Zhang G."/>
            <person name="Zhao Q."/>
            <person name="Zheng L."/>
            <person name="Zheng X.H."/>
            <person name="Zhong F.N."/>
            <person name="Zhong W."/>
            <person name="Zhou X."/>
            <person name="Zhu S.C."/>
            <person name="Zhu X."/>
            <person name="Smith H.O."/>
            <person name="Gibbs R.A."/>
            <person name="Myers E.W."/>
            <person name="Rubin G.M."/>
            <person name="Venter J.C."/>
        </authorList>
    </citation>
    <scope>NUCLEOTIDE SEQUENCE [LARGE SCALE GENOMIC DNA]</scope>
    <source>
        <strain evidence="9">Berkeley</strain>
    </source>
</reference>
<reference evidence="9" key="2">
    <citation type="journal article" date="2002" name="Genome Biol.">
        <title>Annotation of the Drosophila melanogaster euchromatic genome: a systematic review.</title>
        <authorList>
            <person name="Misra S."/>
            <person name="Crosby M.A."/>
            <person name="Mungall C.J."/>
            <person name="Matthews B.B."/>
            <person name="Campbell K.S."/>
            <person name="Hradecky P."/>
            <person name="Huang Y."/>
            <person name="Kaminker J.S."/>
            <person name="Millburn G.H."/>
            <person name="Prochnik S.E."/>
            <person name="Smith C.D."/>
            <person name="Tupy J.L."/>
            <person name="Whitfield E.J."/>
            <person name="Bayraktaroglu L."/>
            <person name="Berman B.P."/>
            <person name="Bettencourt B.R."/>
            <person name="Celniker S.E."/>
            <person name="de Grey A.D.N.J."/>
            <person name="Drysdale R.A."/>
            <person name="Harris N.L."/>
            <person name="Richter J."/>
            <person name="Russo S."/>
            <person name="Schroeder A.J."/>
            <person name="Shu S.Q."/>
            <person name="Stapleton M."/>
            <person name="Yamada C."/>
            <person name="Ashburner M."/>
            <person name="Gelbart W.M."/>
            <person name="Rubin G.M."/>
            <person name="Lewis S.E."/>
        </authorList>
    </citation>
    <scope>GENOME REANNOTATION</scope>
    <source>
        <strain evidence="9">Berkeley</strain>
    </source>
</reference>
<reference evidence="7" key="3">
    <citation type="submission" date="2011-08" db="EMBL/GenBank/DDBJ databases">
        <authorList>
            <person name="Carlson J."/>
            <person name="Booth B."/>
            <person name="Frise E."/>
            <person name="Park S."/>
            <person name="Wan K."/>
            <person name="Yu C."/>
            <person name="Celniker S."/>
        </authorList>
    </citation>
    <scope>NUCLEOTIDE SEQUENCE [LARGE SCALE MRNA] OF 3-176</scope>
    <source>
        <strain evidence="7">Berkeley</strain>
    </source>
</reference>
<reference evidence="6" key="4">
    <citation type="journal article" date="2007" name="Dev. Biol.">
        <title>The MARVEL domain protein, Singles Bar, is required for progression past the pre-fusion complex stage of myoblast fusion.</title>
        <authorList>
            <person name="Estrada B."/>
            <person name="Maeland A.D."/>
            <person name="Gisselbrecht S.S."/>
            <person name="Bloor J.W."/>
            <person name="Brown N.H."/>
            <person name="Michelson A.M."/>
        </authorList>
    </citation>
    <scope>FUNCTION</scope>
    <scope>DEVELOPMENTAL STAGE</scope>
    <scope>DISRUPTION PHENOTYPE</scope>
    <scope>MUTAGENESIS OF ALA-46; 142-TRP--ARG-176 AND 160-LEU--ARG-176</scope>
</reference>
<reference evidence="6" key="5">
    <citation type="journal article" date="2015" name="Dev. Biol.">
        <title>Identification of singles bar as a direct transcriptional target of Drosophila Myocyte enhancer factor-2 and a regulator of adult myoblast fusion.</title>
        <authorList>
            <person name="Brunetti T.M."/>
            <person name="Fremin B.J."/>
            <person name="Cripps R.M."/>
        </authorList>
    </citation>
    <scope>FUNCTION</scope>
    <scope>DEVELOPMENTAL STAGE</scope>
    <scope>INDUCTION BY MEF2</scope>
    <scope>DISRUPTION PHENOTYPE</scope>
</reference>
<sequence length="176" mass="19460">MASFGVRGMGQPLGIRICCCRVCTCINFGFVLSRIGLLKLMQLGLAMLCEGLLIRYGVPYADSIGQALTSFLATTGHCFTTTGILLLCYAFSDKSYSLIRQSLFETLFNGLASCMYFSSSSYMGFACVVWLHPQFLVRPGFWAYPAMTACYYMGYAAGILHALDAYLAFRHFRGAR</sequence>
<organism evidence="9">
    <name type="scientific">Drosophila melanogaster</name>
    <name type="common">Fruit fly</name>
    <dbReference type="NCBI Taxonomy" id="7227"/>
    <lineage>
        <taxon>Eukaryota</taxon>
        <taxon>Metazoa</taxon>
        <taxon>Ecdysozoa</taxon>
        <taxon>Arthropoda</taxon>
        <taxon>Hexapoda</taxon>
        <taxon>Insecta</taxon>
        <taxon>Pterygota</taxon>
        <taxon>Neoptera</taxon>
        <taxon>Endopterygota</taxon>
        <taxon>Diptera</taxon>
        <taxon>Brachycera</taxon>
        <taxon>Muscomorpha</taxon>
        <taxon>Ephydroidea</taxon>
        <taxon>Drosophilidae</taxon>
        <taxon>Drosophila</taxon>
        <taxon>Sophophora</taxon>
    </lineage>
</organism>
<evidence type="ECO:0000255" key="1"/>
<evidence type="ECO:0000255" key="2">
    <source>
        <dbReference type="PROSITE-ProRule" id="PRU00581"/>
    </source>
</evidence>
<evidence type="ECO:0000269" key="3">
    <source>
    </source>
</evidence>
<evidence type="ECO:0000269" key="4">
    <source>
    </source>
</evidence>
<evidence type="ECO:0000303" key="5">
    <source>
    </source>
</evidence>
<evidence type="ECO:0000305" key="6"/>
<evidence type="ECO:0000312" key="7">
    <source>
        <dbReference type="EMBL" id="AEM92656.1"/>
    </source>
</evidence>
<evidence type="ECO:0000312" key="8">
    <source>
        <dbReference type="FlyBase" id="FBgn0261245"/>
    </source>
</evidence>
<evidence type="ECO:0000312" key="9">
    <source>
        <dbReference type="Proteomes" id="UP000000803"/>
    </source>
</evidence>
<keyword id="KW-0472">Membrane</keyword>
<keyword id="KW-0517">Myogenesis</keyword>
<keyword id="KW-1185">Reference proteome</keyword>
<keyword id="KW-0812">Transmembrane</keyword>
<keyword id="KW-1133">Transmembrane helix</keyword>
<protein>
    <recommendedName>
        <fullName evidence="5">Protein singles bar</fullName>
    </recommendedName>
</protein>
<proteinExistence type="evidence at protein level"/>
<name>SINGL_DROME</name>
<feature type="chain" id="PRO_0000438867" description="Protein singles bar" evidence="6">
    <location>
        <begin position="1"/>
        <end position="176"/>
    </location>
</feature>
<feature type="transmembrane region" description="Helical" evidence="1">
    <location>
        <begin position="13"/>
        <end position="35"/>
    </location>
</feature>
<feature type="transmembrane region" description="Helical" evidence="1">
    <location>
        <begin position="71"/>
        <end position="91"/>
    </location>
</feature>
<feature type="transmembrane region" description="Helical" evidence="1">
    <location>
        <begin position="111"/>
        <end position="131"/>
    </location>
</feature>
<feature type="transmembrane region" description="Helical" evidence="1">
    <location>
        <begin position="140"/>
        <end position="160"/>
    </location>
</feature>
<feature type="domain" description="MARVEL" evidence="2">
    <location>
        <begin position="30"/>
        <end position="173"/>
    </location>
</feature>
<feature type="mutagenesis site" description="In sing-22; myoblast fusion is abolished and consequently multinucleated myofibers fail to form during embryonic muscle development." evidence="3">
    <original>A</original>
    <variation>V</variation>
    <location>
        <position position="46"/>
    </location>
</feature>
<feature type="mutagenesis site" description="In sing-23; myoblast fusion is abolished and consequently multinucleated myofibers fail to form during embryonic muscle development." evidence="3">
    <location>
        <begin position="142"/>
        <end position="176"/>
    </location>
</feature>
<feature type="mutagenesis site" description="In sing-27; myoblast fusion is abolished and consequently multinucleated myofibers fail to form during embryonic muscle development." evidence="3">
    <location>
        <begin position="160"/>
        <end position="176"/>
    </location>
</feature>
<dbReference type="EMBL" id="AE014298">
    <property type="protein sequence ID" value="AAF48643.1"/>
    <property type="molecule type" value="Genomic_DNA"/>
</dbReference>
<dbReference type="EMBL" id="BT128825">
    <property type="protein sequence ID" value="AEM92656.1"/>
    <property type="molecule type" value="mRNA"/>
</dbReference>
<dbReference type="RefSeq" id="NP_573146.1">
    <property type="nucleotide sequence ID" value="NM_132918.2"/>
</dbReference>
<dbReference type="SMR" id="Q9VXD1"/>
<dbReference type="FunCoup" id="Q9VXD1">
    <property type="interactions" value="20"/>
</dbReference>
<dbReference type="STRING" id="7227.FBpp0074092"/>
<dbReference type="PaxDb" id="7227-FBpp0074092"/>
<dbReference type="EnsemblMetazoa" id="FBtr0074318">
    <property type="protein sequence ID" value="FBpp0074092"/>
    <property type="gene ID" value="FBgn0261245"/>
</dbReference>
<dbReference type="GeneID" id="32644"/>
<dbReference type="KEGG" id="dme:Dmel_CG13011"/>
<dbReference type="UCSC" id="CG13011-RA">
    <property type="organism name" value="d. melanogaster"/>
</dbReference>
<dbReference type="AGR" id="FB:FBgn0261245"/>
<dbReference type="CTD" id="32644"/>
<dbReference type="FlyBase" id="FBgn0261245">
    <property type="gene designation" value="sing"/>
</dbReference>
<dbReference type="VEuPathDB" id="VectorBase:FBgn0261245"/>
<dbReference type="eggNOG" id="ENOG502S24W">
    <property type="taxonomic scope" value="Eukaryota"/>
</dbReference>
<dbReference type="HOGENOM" id="CLU_119831_0_0_1"/>
<dbReference type="InParanoid" id="Q9VXD1"/>
<dbReference type="OMA" id="GIKICCC"/>
<dbReference type="OrthoDB" id="10044855at2759"/>
<dbReference type="PhylomeDB" id="Q9VXD1"/>
<dbReference type="BioGRID-ORCS" id="32644">
    <property type="hits" value="0 hits in 1 CRISPR screen"/>
</dbReference>
<dbReference type="GenomeRNAi" id="32644"/>
<dbReference type="PRO" id="PR:Q9VXD1"/>
<dbReference type="Proteomes" id="UP000000803">
    <property type="component" value="Chromosome X"/>
</dbReference>
<dbReference type="Bgee" id="FBgn0261245">
    <property type="expression patterns" value="Expressed in embryonic myoblast (Drosophila) and 18 other cell types or tissues"/>
</dbReference>
<dbReference type="GO" id="GO:0016020">
    <property type="term" value="C:membrane"/>
    <property type="evidence" value="ECO:0000255"/>
    <property type="project" value="FlyBase"/>
</dbReference>
<dbReference type="GO" id="GO:0007527">
    <property type="term" value="P:adult somatic muscle development"/>
    <property type="evidence" value="ECO:0000315"/>
    <property type="project" value="FlyBase"/>
</dbReference>
<dbReference type="GO" id="GO:0007517">
    <property type="term" value="P:muscle organ development"/>
    <property type="evidence" value="ECO:0007669"/>
    <property type="project" value="UniProtKB-KW"/>
</dbReference>
<dbReference type="GO" id="GO:0007520">
    <property type="term" value="P:myoblast fusion"/>
    <property type="evidence" value="ECO:0000315"/>
    <property type="project" value="FlyBase"/>
</dbReference>
<dbReference type="InterPro" id="IPR008253">
    <property type="entry name" value="Marvel"/>
</dbReference>
<dbReference type="Pfam" id="PF01284">
    <property type="entry name" value="MARVEL"/>
    <property type="match status" value="1"/>
</dbReference>
<dbReference type="PROSITE" id="PS51225">
    <property type="entry name" value="MARVEL"/>
    <property type="match status" value="1"/>
</dbReference>
<gene>
    <name evidence="5 8" type="primary">sing</name>
    <name evidence="8" type="ORF">CG13011</name>
</gene>
<accession>Q9VXD1</accession>
<accession>G2J5W8</accession>